<comment type="function">
    <text evidence="1">Catalyzes the conversion of AMP and phosphate to adenine and ribose 1,5-bisphosphate (R15P). Exhibits phosphorylase activity toward CMP and UMP in addition to AMP. Functions in an archaeal AMP degradation pathway, together with R15P isomerase and RubisCO.</text>
</comment>
<comment type="catalytic activity">
    <reaction evidence="1">
        <text>AMP + phosphate = alpha-D-ribose 1,5-bisphosphate + adenine</text>
        <dbReference type="Rhea" id="RHEA:36975"/>
        <dbReference type="ChEBI" id="CHEBI:16708"/>
        <dbReference type="ChEBI" id="CHEBI:43474"/>
        <dbReference type="ChEBI" id="CHEBI:68688"/>
        <dbReference type="ChEBI" id="CHEBI:456215"/>
        <dbReference type="EC" id="2.4.2.57"/>
    </reaction>
</comment>
<comment type="catalytic activity">
    <reaction evidence="1">
        <text>CMP + phosphate = cytosine + alpha-D-ribose 1,5-bisphosphate</text>
        <dbReference type="Rhea" id="RHEA:36987"/>
        <dbReference type="ChEBI" id="CHEBI:16040"/>
        <dbReference type="ChEBI" id="CHEBI:43474"/>
        <dbReference type="ChEBI" id="CHEBI:60377"/>
        <dbReference type="ChEBI" id="CHEBI:68688"/>
        <dbReference type="EC" id="2.4.2.57"/>
    </reaction>
</comment>
<comment type="catalytic activity">
    <reaction evidence="1">
        <text>UMP + phosphate = alpha-D-ribose 1,5-bisphosphate + uracil</text>
        <dbReference type="Rhea" id="RHEA:36991"/>
        <dbReference type="ChEBI" id="CHEBI:17568"/>
        <dbReference type="ChEBI" id="CHEBI:43474"/>
        <dbReference type="ChEBI" id="CHEBI:57865"/>
        <dbReference type="ChEBI" id="CHEBI:68688"/>
        <dbReference type="EC" id="2.4.2.57"/>
    </reaction>
</comment>
<comment type="similarity">
    <text evidence="1">Belongs to the thymidine/pyrimidine-nucleoside phosphorylase family. Type 2 subfamily.</text>
</comment>
<gene>
    <name type="ordered locus">Mthe_0462</name>
</gene>
<protein>
    <recommendedName>
        <fullName evidence="1">AMP phosphorylase</fullName>
        <shortName evidence="1">AMPpase</shortName>
        <ecNumber evidence="1">2.4.2.57</ecNumber>
    </recommendedName>
    <alternativeName>
        <fullName evidence="1">Nucleoside monophosphate phosphorylase</fullName>
        <shortName evidence="1">NMP phosphorylase</shortName>
    </alternativeName>
</protein>
<name>AMPPA_METTP</name>
<dbReference type="EC" id="2.4.2.57" evidence="1"/>
<dbReference type="EMBL" id="CP000477">
    <property type="protein sequence ID" value="ABK14253.1"/>
    <property type="molecule type" value="Genomic_DNA"/>
</dbReference>
<dbReference type="RefSeq" id="WP_011695651.1">
    <property type="nucleotide sequence ID" value="NC_008553.1"/>
</dbReference>
<dbReference type="SMR" id="A0B6C9"/>
<dbReference type="STRING" id="349307.Mthe_0462"/>
<dbReference type="GeneID" id="4462619"/>
<dbReference type="KEGG" id="mtp:Mthe_0462"/>
<dbReference type="HOGENOM" id="CLU_025040_6_0_2"/>
<dbReference type="OrthoDB" id="9827at2157"/>
<dbReference type="Proteomes" id="UP000000674">
    <property type="component" value="Chromosome"/>
</dbReference>
<dbReference type="GO" id="GO:0005829">
    <property type="term" value="C:cytosol"/>
    <property type="evidence" value="ECO:0007669"/>
    <property type="project" value="TreeGrafter"/>
</dbReference>
<dbReference type="GO" id="GO:0004645">
    <property type="term" value="F:1,4-alpha-oligoglucan phosphorylase activity"/>
    <property type="evidence" value="ECO:0007669"/>
    <property type="project" value="InterPro"/>
</dbReference>
<dbReference type="GO" id="GO:0016208">
    <property type="term" value="F:AMP binding"/>
    <property type="evidence" value="ECO:0007669"/>
    <property type="project" value="UniProtKB-UniRule"/>
</dbReference>
<dbReference type="GO" id="GO:0016763">
    <property type="term" value="F:pentosyltransferase activity"/>
    <property type="evidence" value="ECO:0007669"/>
    <property type="project" value="UniProtKB-UniRule"/>
</dbReference>
<dbReference type="GO" id="GO:0006196">
    <property type="term" value="P:AMP catabolic process"/>
    <property type="evidence" value="ECO:0007669"/>
    <property type="project" value="UniProtKB-UniRule"/>
</dbReference>
<dbReference type="GO" id="GO:0046125">
    <property type="term" value="P:pyrimidine deoxyribonucleoside metabolic process"/>
    <property type="evidence" value="ECO:0007669"/>
    <property type="project" value="InterPro"/>
</dbReference>
<dbReference type="GO" id="GO:0006206">
    <property type="term" value="P:pyrimidine nucleobase metabolic process"/>
    <property type="evidence" value="ECO:0007669"/>
    <property type="project" value="InterPro"/>
</dbReference>
<dbReference type="CDD" id="cd02775">
    <property type="entry name" value="MopB_CT"/>
    <property type="match status" value="1"/>
</dbReference>
<dbReference type="Gene3D" id="1.20.970.50">
    <property type="match status" value="1"/>
</dbReference>
<dbReference type="Gene3D" id="2.40.40.20">
    <property type="match status" value="1"/>
</dbReference>
<dbReference type="Gene3D" id="3.40.1030.10">
    <property type="entry name" value="Nucleoside phosphorylase/phosphoribosyltransferase catalytic domain"/>
    <property type="match status" value="1"/>
</dbReference>
<dbReference type="Gene3D" id="3.90.1170.30">
    <property type="entry name" value="Pyrimidine nucleoside phosphorylase-like, C-terminal domain"/>
    <property type="match status" value="1"/>
</dbReference>
<dbReference type="HAMAP" id="MF_02132">
    <property type="entry name" value="AMP_phosphorylase"/>
    <property type="match status" value="1"/>
</dbReference>
<dbReference type="InterPro" id="IPR017713">
    <property type="entry name" value="AMP_phosphorylase"/>
</dbReference>
<dbReference type="InterPro" id="IPR009010">
    <property type="entry name" value="Asp_de-COase-like_dom_sf"/>
</dbReference>
<dbReference type="InterPro" id="IPR000312">
    <property type="entry name" value="Glycosyl_Trfase_fam3"/>
</dbReference>
<dbReference type="InterPro" id="IPR017459">
    <property type="entry name" value="Glycosyl_Trfase_fam3_N_dom"/>
</dbReference>
<dbReference type="InterPro" id="IPR036320">
    <property type="entry name" value="Glycosyl_Trfase_fam3_N_dom_sf"/>
</dbReference>
<dbReference type="InterPro" id="IPR035902">
    <property type="entry name" value="Nuc_phospho_transferase"/>
</dbReference>
<dbReference type="InterPro" id="IPR036566">
    <property type="entry name" value="PYNP-like_C_sf"/>
</dbReference>
<dbReference type="InterPro" id="IPR013102">
    <property type="entry name" value="PYNP_C"/>
</dbReference>
<dbReference type="InterPro" id="IPR017872">
    <property type="entry name" value="Pyrmidine_PPase_CS"/>
</dbReference>
<dbReference type="InterPro" id="IPR013466">
    <property type="entry name" value="Thymidine/AMP_Pase"/>
</dbReference>
<dbReference type="InterPro" id="IPR000053">
    <property type="entry name" value="Thymidine/pyrmidine_PPase"/>
</dbReference>
<dbReference type="NCBIfam" id="TIGR03327">
    <property type="entry name" value="AMP_phos"/>
    <property type="match status" value="1"/>
</dbReference>
<dbReference type="NCBIfam" id="TIGR02645">
    <property type="entry name" value="ARCH_P_rylase"/>
    <property type="match status" value="1"/>
</dbReference>
<dbReference type="NCBIfam" id="NF003338">
    <property type="entry name" value="PRK04350.1"/>
    <property type="match status" value="1"/>
</dbReference>
<dbReference type="PANTHER" id="PTHR10515">
    <property type="entry name" value="THYMIDINE PHOSPHORYLASE"/>
    <property type="match status" value="1"/>
</dbReference>
<dbReference type="PANTHER" id="PTHR10515:SF0">
    <property type="entry name" value="THYMIDINE PHOSPHORYLASE"/>
    <property type="match status" value="1"/>
</dbReference>
<dbReference type="Pfam" id="PF02885">
    <property type="entry name" value="Glycos_trans_3N"/>
    <property type="match status" value="1"/>
</dbReference>
<dbReference type="Pfam" id="PF00591">
    <property type="entry name" value="Glycos_transf_3"/>
    <property type="match status" value="1"/>
</dbReference>
<dbReference type="Pfam" id="PF07831">
    <property type="entry name" value="PYNP_C"/>
    <property type="match status" value="1"/>
</dbReference>
<dbReference type="SMART" id="SM00941">
    <property type="entry name" value="PYNP_C"/>
    <property type="match status" value="1"/>
</dbReference>
<dbReference type="SUPFAM" id="SSF50692">
    <property type="entry name" value="ADC-like"/>
    <property type="match status" value="1"/>
</dbReference>
<dbReference type="SUPFAM" id="SSF52418">
    <property type="entry name" value="Nucleoside phosphorylase/phosphoribosyltransferase catalytic domain"/>
    <property type="match status" value="1"/>
</dbReference>
<dbReference type="SUPFAM" id="SSF47648">
    <property type="entry name" value="Nucleoside phosphorylase/phosphoribosyltransferase N-terminal domain"/>
    <property type="match status" value="1"/>
</dbReference>
<dbReference type="SUPFAM" id="SSF54680">
    <property type="entry name" value="Pyrimidine nucleoside phosphorylase C-terminal domain"/>
    <property type="match status" value="1"/>
</dbReference>
<dbReference type="PROSITE" id="PS00647">
    <property type="entry name" value="THYMID_PHOSPHORYLASE"/>
    <property type="match status" value="1"/>
</dbReference>
<sequence length="512" mass="55406">MFEVVPFDIEIGQYKVMLNIADARAMGLNPGDRVRVRTRGASLTAILDVTGQMIGQGQVGIFTEAFRDLKEAKSVEISPAPRPASISYIKMLMDRQKLSEDQIRSIVRDIVYNNLSEIELSAYITASYIHNLDPQETEWLTRAMIETGERIYFDKHPVVDKHSIGGVPGNKVSMLVVPIVAASGLLIPKTSSRAITGAGGTADLMEVLAPVEFTADEIKEITETVGGVIAWGGATNIAPADDRLIKAEYALAIDPYSQMLASIMAKKGAVGADAVVVDMPTGPGTKLETPEKARVLAKDLTDLGERLGIRVECAMTFGGSPVGRTVGPALEVREALKMLETGEGPNSLREKSLALAGILLEMGGVAARGEGYRAAEEILVSGKAHRKLMEIVEAQGGDPKIRSEDIQIGEHQKQILSPTNGYVVAFYNKRIIEIARAAGAPGDKRAGVIIHKKMGEIVKKGEPLLTICSSTDWELECAVKMCSMRDALEQPPIVVEGMLLERYPTERYPRTI</sequence>
<reference key="1">
    <citation type="submission" date="2006-10" db="EMBL/GenBank/DDBJ databases">
        <title>Complete sequence of Methanosaeta thermophila PT.</title>
        <authorList>
            <consortium name="US DOE Joint Genome Institute"/>
            <person name="Copeland A."/>
            <person name="Lucas S."/>
            <person name="Lapidus A."/>
            <person name="Barry K."/>
            <person name="Detter J.C."/>
            <person name="Glavina del Rio T."/>
            <person name="Hammon N."/>
            <person name="Israni S."/>
            <person name="Pitluck S."/>
            <person name="Chain P."/>
            <person name="Malfatti S."/>
            <person name="Shin M."/>
            <person name="Vergez L."/>
            <person name="Schmutz J."/>
            <person name="Larimer F."/>
            <person name="Land M."/>
            <person name="Hauser L."/>
            <person name="Kyrpides N."/>
            <person name="Kim E."/>
            <person name="Smith K.S."/>
            <person name="Ingram-Smith C."/>
            <person name="Richardson P."/>
        </authorList>
    </citation>
    <scope>NUCLEOTIDE SEQUENCE [LARGE SCALE GENOMIC DNA]</scope>
    <source>
        <strain>DSM 6194 / JCM 14653 / NBRC 101360 / PT</strain>
    </source>
</reference>
<evidence type="ECO:0000255" key="1">
    <source>
        <dbReference type="HAMAP-Rule" id="MF_02132"/>
    </source>
</evidence>
<proteinExistence type="inferred from homology"/>
<organism>
    <name type="scientific">Methanothrix thermoacetophila (strain DSM 6194 / JCM 14653 / NBRC 101360 / PT)</name>
    <name type="common">Methanosaeta thermophila</name>
    <dbReference type="NCBI Taxonomy" id="349307"/>
    <lineage>
        <taxon>Archaea</taxon>
        <taxon>Methanobacteriati</taxon>
        <taxon>Methanobacteriota</taxon>
        <taxon>Stenosarchaea group</taxon>
        <taxon>Methanomicrobia</taxon>
        <taxon>Methanotrichales</taxon>
        <taxon>Methanotrichaceae</taxon>
        <taxon>Methanothrix</taxon>
    </lineage>
</organism>
<feature type="chain" id="PRO_0000314729" description="AMP phosphorylase">
    <location>
        <begin position="1"/>
        <end position="512"/>
    </location>
</feature>
<feature type="active site" description="Proton donor" evidence="1">
    <location>
        <position position="254"/>
    </location>
</feature>
<feature type="binding site" evidence="1">
    <location>
        <position position="166"/>
    </location>
    <ligand>
        <name>AMP</name>
        <dbReference type="ChEBI" id="CHEBI:456215"/>
    </ligand>
</feature>
<feature type="binding site" evidence="1">
    <location>
        <begin position="192"/>
        <end position="197"/>
    </location>
    <ligand>
        <name>AMP</name>
        <dbReference type="ChEBI" id="CHEBI:456215"/>
    </ligand>
</feature>
<feature type="binding site" evidence="1">
    <location>
        <position position="201"/>
    </location>
    <ligand>
        <name>AMP</name>
        <dbReference type="ChEBI" id="CHEBI:456215"/>
    </ligand>
</feature>
<feature type="binding site" evidence="1">
    <location>
        <position position="262"/>
    </location>
    <ligand>
        <name>AMP</name>
        <dbReference type="ChEBI" id="CHEBI:456215"/>
    </ligand>
</feature>
<feature type="binding site" evidence="1">
    <location>
        <position position="286"/>
    </location>
    <ligand>
        <name>AMP</name>
        <dbReference type="ChEBI" id="CHEBI:456215"/>
    </ligand>
</feature>
<keyword id="KW-0328">Glycosyltransferase</keyword>
<keyword id="KW-1185">Reference proteome</keyword>
<keyword id="KW-0808">Transferase</keyword>
<accession>A0B6C9</accession>